<sequence length="249" mass="27232">MSFTVIIPARYQSTRLPGKPLADICGKPMIQWVYEQASKAGADRVIIATDDSRIEAVVKGFGGDVCMTSPNHESGTERLAEVIEKCGISADEIVVNVQGDEPLIPPSIIQQVAQNLSDSVAPMATLAVTIDEEDDVFNPNAVKVVTDAEGYALYFSRASIPWDRDAFAQGETLTANPLLRHIGIYAYRAGFINTYINWQPSVLEKIECLEQLRVLWYGEKIHVAVAKEAPAAGVDTPEDLEKVRAILSK</sequence>
<accession>B5ETK7</accession>
<comment type="function">
    <text evidence="1">Activates KDO (a required 8-carbon sugar) for incorporation into bacterial lipopolysaccharide in Gram-negative bacteria.</text>
</comment>
<comment type="catalytic activity">
    <reaction evidence="1">
        <text>3-deoxy-alpha-D-manno-oct-2-ulosonate + CTP = CMP-3-deoxy-beta-D-manno-octulosonate + diphosphate</text>
        <dbReference type="Rhea" id="RHEA:23448"/>
        <dbReference type="ChEBI" id="CHEBI:33019"/>
        <dbReference type="ChEBI" id="CHEBI:37563"/>
        <dbReference type="ChEBI" id="CHEBI:85986"/>
        <dbReference type="ChEBI" id="CHEBI:85987"/>
        <dbReference type="EC" id="2.7.7.38"/>
    </reaction>
</comment>
<comment type="pathway">
    <text evidence="1">Nucleotide-sugar biosynthesis; CMP-3-deoxy-D-manno-octulosonate biosynthesis; CMP-3-deoxy-D-manno-octulosonate from 3-deoxy-D-manno-octulosonate and CTP: step 1/1.</text>
</comment>
<comment type="pathway">
    <text evidence="1">Bacterial outer membrane biogenesis; lipopolysaccharide biosynthesis.</text>
</comment>
<comment type="subcellular location">
    <subcellularLocation>
        <location evidence="1">Cytoplasm</location>
    </subcellularLocation>
</comment>
<comment type="similarity">
    <text evidence="1">Belongs to the KdsB family.</text>
</comment>
<organism>
    <name type="scientific">Aliivibrio fischeri (strain MJ11)</name>
    <name type="common">Vibrio fischeri</name>
    <dbReference type="NCBI Taxonomy" id="388396"/>
    <lineage>
        <taxon>Bacteria</taxon>
        <taxon>Pseudomonadati</taxon>
        <taxon>Pseudomonadota</taxon>
        <taxon>Gammaproteobacteria</taxon>
        <taxon>Vibrionales</taxon>
        <taxon>Vibrionaceae</taxon>
        <taxon>Aliivibrio</taxon>
    </lineage>
</organism>
<keyword id="KW-0963">Cytoplasm</keyword>
<keyword id="KW-0448">Lipopolysaccharide biosynthesis</keyword>
<keyword id="KW-0548">Nucleotidyltransferase</keyword>
<keyword id="KW-0808">Transferase</keyword>
<dbReference type="EC" id="2.7.7.38" evidence="1"/>
<dbReference type="EMBL" id="CP001133">
    <property type="protein sequence ID" value="ACH63657.1"/>
    <property type="molecule type" value="Genomic_DNA"/>
</dbReference>
<dbReference type="RefSeq" id="WP_005422541.1">
    <property type="nucleotide sequence ID" value="NC_011186.1"/>
</dbReference>
<dbReference type="SMR" id="B5ETK7"/>
<dbReference type="GeneID" id="54165753"/>
<dbReference type="KEGG" id="vfm:VFMJ11_A0476"/>
<dbReference type="HOGENOM" id="CLU_065038_1_0_6"/>
<dbReference type="UniPathway" id="UPA00030"/>
<dbReference type="UniPathway" id="UPA00358">
    <property type="reaction ID" value="UER00476"/>
</dbReference>
<dbReference type="Proteomes" id="UP000001857">
    <property type="component" value="Chromosome II"/>
</dbReference>
<dbReference type="GO" id="GO:0005829">
    <property type="term" value="C:cytosol"/>
    <property type="evidence" value="ECO:0007669"/>
    <property type="project" value="TreeGrafter"/>
</dbReference>
<dbReference type="GO" id="GO:0008690">
    <property type="term" value="F:3-deoxy-manno-octulosonate cytidylyltransferase activity"/>
    <property type="evidence" value="ECO:0007669"/>
    <property type="project" value="UniProtKB-UniRule"/>
</dbReference>
<dbReference type="GO" id="GO:0033468">
    <property type="term" value="P:CMP-keto-3-deoxy-D-manno-octulosonic acid biosynthetic process"/>
    <property type="evidence" value="ECO:0007669"/>
    <property type="project" value="UniProtKB-UniRule"/>
</dbReference>
<dbReference type="GO" id="GO:0009103">
    <property type="term" value="P:lipopolysaccharide biosynthetic process"/>
    <property type="evidence" value="ECO:0007669"/>
    <property type="project" value="UniProtKB-UniRule"/>
</dbReference>
<dbReference type="CDD" id="cd02517">
    <property type="entry name" value="CMP-KDO-Synthetase"/>
    <property type="match status" value="1"/>
</dbReference>
<dbReference type="FunFam" id="3.90.550.10:FF:000011">
    <property type="entry name" value="3-deoxy-manno-octulosonate cytidylyltransferase"/>
    <property type="match status" value="1"/>
</dbReference>
<dbReference type="Gene3D" id="3.90.550.10">
    <property type="entry name" value="Spore Coat Polysaccharide Biosynthesis Protein SpsA, Chain A"/>
    <property type="match status" value="1"/>
</dbReference>
<dbReference type="HAMAP" id="MF_00057">
    <property type="entry name" value="KdsB"/>
    <property type="match status" value="1"/>
</dbReference>
<dbReference type="InterPro" id="IPR003329">
    <property type="entry name" value="Cytidylyl_trans"/>
</dbReference>
<dbReference type="InterPro" id="IPR004528">
    <property type="entry name" value="KdsB"/>
</dbReference>
<dbReference type="InterPro" id="IPR029044">
    <property type="entry name" value="Nucleotide-diphossugar_trans"/>
</dbReference>
<dbReference type="NCBIfam" id="TIGR00466">
    <property type="entry name" value="kdsB"/>
    <property type="match status" value="1"/>
</dbReference>
<dbReference type="NCBIfam" id="NF003950">
    <property type="entry name" value="PRK05450.1-3"/>
    <property type="match status" value="1"/>
</dbReference>
<dbReference type="NCBIfam" id="NF003952">
    <property type="entry name" value="PRK05450.1-5"/>
    <property type="match status" value="1"/>
</dbReference>
<dbReference type="NCBIfam" id="NF009905">
    <property type="entry name" value="PRK13368.1"/>
    <property type="match status" value="1"/>
</dbReference>
<dbReference type="PANTHER" id="PTHR42866">
    <property type="entry name" value="3-DEOXY-MANNO-OCTULOSONATE CYTIDYLYLTRANSFERASE"/>
    <property type="match status" value="1"/>
</dbReference>
<dbReference type="PANTHER" id="PTHR42866:SF2">
    <property type="entry name" value="3-DEOXY-MANNO-OCTULOSONATE CYTIDYLYLTRANSFERASE, MITOCHONDRIAL"/>
    <property type="match status" value="1"/>
</dbReference>
<dbReference type="Pfam" id="PF02348">
    <property type="entry name" value="CTP_transf_3"/>
    <property type="match status" value="1"/>
</dbReference>
<dbReference type="SUPFAM" id="SSF53448">
    <property type="entry name" value="Nucleotide-diphospho-sugar transferases"/>
    <property type="match status" value="1"/>
</dbReference>
<gene>
    <name evidence="1" type="primary">kdsB</name>
    <name type="ordered locus">VFMJ11_A0476</name>
</gene>
<proteinExistence type="inferred from homology"/>
<protein>
    <recommendedName>
        <fullName evidence="1">3-deoxy-manno-octulosonate cytidylyltransferase</fullName>
        <ecNumber evidence="1">2.7.7.38</ecNumber>
    </recommendedName>
    <alternativeName>
        <fullName evidence="1">CMP-2-keto-3-deoxyoctulosonic acid synthase</fullName>
        <shortName evidence="1">CKS</shortName>
        <shortName evidence="1">CMP-KDO synthase</shortName>
    </alternativeName>
</protein>
<name>KDSB_ALIFM</name>
<evidence type="ECO:0000255" key="1">
    <source>
        <dbReference type="HAMAP-Rule" id="MF_00057"/>
    </source>
</evidence>
<feature type="chain" id="PRO_1000091910" description="3-deoxy-manno-octulosonate cytidylyltransferase">
    <location>
        <begin position="1"/>
        <end position="249"/>
    </location>
</feature>
<reference key="1">
    <citation type="submission" date="2008-08" db="EMBL/GenBank/DDBJ databases">
        <title>Complete sequence of Vibrio fischeri strain MJ11.</title>
        <authorList>
            <person name="Mandel M.J."/>
            <person name="Stabb E.V."/>
            <person name="Ruby E.G."/>
            <person name="Ferriera S."/>
            <person name="Johnson J."/>
            <person name="Kravitz S."/>
            <person name="Beeson K."/>
            <person name="Sutton G."/>
            <person name="Rogers Y.-H."/>
            <person name="Friedman R."/>
            <person name="Frazier M."/>
            <person name="Venter J.C."/>
        </authorList>
    </citation>
    <scope>NUCLEOTIDE SEQUENCE [LARGE SCALE GENOMIC DNA]</scope>
    <source>
        <strain>MJ11</strain>
    </source>
</reference>